<keyword id="KW-0025">Alternative splicing</keyword>
<keyword id="KW-0256">Endoplasmic reticulum</keyword>
<keyword id="KW-0274">FAD</keyword>
<keyword id="KW-0285">Flavoprotein</keyword>
<keyword id="KW-0443">Lipid metabolism</keyword>
<keyword id="KW-0472">Membrane</keyword>
<keyword id="KW-0488">Methylation</keyword>
<keyword id="KW-0492">Microsome</keyword>
<keyword id="KW-0503">Monooxygenase</keyword>
<keyword id="KW-0521">NADP</keyword>
<keyword id="KW-0560">Oxidoreductase</keyword>
<keyword id="KW-0597">Phosphoprotein</keyword>
<keyword id="KW-1267">Proteomics identification</keyword>
<keyword id="KW-1185">Reference proteome</keyword>
<keyword id="KW-0812">Transmembrane</keyword>
<keyword id="KW-1133">Transmembrane helix</keyword>
<dbReference type="EC" id="1.14.13.-" evidence="6 7 8"/>
<dbReference type="EC" id="1.14.13.8" evidence="9"/>
<dbReference type="EC" id="1.6.3.1" evidence="7"/>
<dbReference type="EMBL" id="L37080">
    <property type="protein sequence ID" value="AAA67849.1"/>
    <property type="molecule type" value="mRNA"/>
</dbReference>
<dbReference type="EMBL" id="Z47553">
    <property type="protein sequence ID" value="CAA87633.1"/>
    <property type="molecule type" value="mRNA"/>
</dbReference>
<dbReference type="EMBL" id="AY902236">
    <property type="protein sequence ID" value="AAW69390.1"/>
    <property type="molecule type" value="Genomic_DNA"/>
</dbReference>
<dbReference type="EMBL" id="AK314647">
    <property type="protein sequence ID" value="BAG37208.1"/>
    <property type="molecule type" value="mRNA"/>
</dbReference>
<dbReference type="EMBL" id="AK225739">
    <property type="status" value="NOT_ANNOTATED_CDS"/>
    <property type="molecule type" value="mRNA"/>
</dbReference>
<dbReference type="EMBL" id="AL356378">
    <property type="protein sequence ID" value="CAH72648.1"/>
    <property type="molecule type" value="Genomic_DNA"/>
</dbReference>
<dbReference type="EMBL" id="AL356378">
    <property type="protein sequence ID" value="CAH72649.1"/>
    <property type="molecule type" value="Genomic_DNA"/>
</dbReference>
<dbReference type="EMBL" id="CH471223">
    <property type="protein sequence ID" value="EAW50939.1"/>
    <property type="molecule type" value="Genomic_DNA"/>
</dbReference>
<dbReference type="EMBL" id="CH471223">
    <property type="protein sequence ID" value="EAW50940.1"/>
    <property type="molecule type" value="Genomic_DNA"/>
</dbReference>
<dbReference type="EMBL" id="BC035687">
    <property type="protein sequence ID" value="AAH35687.1"/>
    <property type="molecule type" value="mRNA"/>
</dbReference>
<dbReference type="CCDS" id="CCDS44209.1">
    <molecule id="P49326-3"/>
</dbReference>
<dbReference type="CCDS" id="CCDS44210.1">
    <molecule id="P49326-2"/>
</dbReference>
<dbReference type="CCDS" id="CCDS926.1">
    <molecule id="P49326-1"/>
</dbReference>
<dbReference type="PIR" id="S51131">
    <property type="entry name" value="S51131"/>
</dbReference>
<dbReference type="PIR" id="S71618">
    <property type="entry name" value="S71618"/>
</dbReference>
<dbReference type="RefSeq" id="NP_001138301.1">
    <molecule id="P49326-3"/>
    <property type="nucleotide sequence ID" value="NM_001144829.3"/>
</dbReference>
<dbReference type="RefSeq" id="NP_001138302.1">
    <molecule id="P49326-2"/>
    <property type="nucleotide sequence ID" value="NM_001144830.3"/>
</dbReference>
<dbReference type="RefSeq" id="NP_001452.2">
    <molecule id="P49326-1"/>
    <property type="nucleotide sequence ID" value="NM_001461.4"/>
</dbReference>
<dbReference type="RefSeq" id="XP_005273003.1">
    <molecule id="P49326-1"/>
    <property type="nucleotide sequence ID" value="XM_005272946.6"/>
</dbReference>
<dbReference type="RefSeq" id="XP_005273004.1">
    <molecule id="P49326-1"/>
    <property type="nucleotide sequence ID" value="XM_005272947.6"/>
</dbReference>
<dbReference type="RefSeq" id="XP_005273005.1">
    <molecule id="P49326-1"/>
    <property type="nucleotide sequence ID" value="XM_005272948.6"/>
</dbReference>
<dbReference type="RefSeq" id="XP_006711308.1">
    <property type="nucleotide sequence ID" value="XM_006711245.3"/>
</dbReference>
<dbReference type="RefSeq" id="XP_011507652.1">
    <molecule id="P49326-1"/>
    <property type="nucleotide sequence ID" value="XM_011509350.4"/>
</dbReference>
<dbReference type="RefSeq" id="XP_054191475.1">
    <molecule id="P49326-1"/>
    <property type="nucleotide sequence ID" value="XM_054335500.1"/>
</dbReference>
<dbReference type="RefSeq" id="XP_054191476.1">
    <molecule id="P49326-1"/>
    <property type="nucleotide sequence ID" value="XM_054335501.1"/>
</dbReference>
<dbReference type="RefSeq" id="XP_054191477.1">
    <molecule id="P49326-1"/>
    <property type="nucleotide sequence ID" value="XM_054335502.1"/>
</dbReference>
<dbReference type="SMR" id="P49326"/>
<dbReference type="BioGRID" id="108617">
    <property type="interactions" value="55"/>
</dbReference>
<dbReference type="FunCoup" id="P49326">
    <property type="interactions" value="885"/>
</dbReference>
<dbReference type="IntAct" id="P49326">
    <property type="interactions" value="5"/>
</dbReference>
<dbReference type="STRING" id="9606.ENSP00000254090"/>
<dbReference type="ChEMBL" id="CHEMBL3430871"/>
<dbReference type="SwissLipids" id="SLP:000001774"/>
<dbReference type="GlyGen" id="P49326">
    <property type="glycosylation" value="1 site, 1 O-linked glycan (1 site)"/>
</dbReference>
<dbReference type="iPTMnet" id="P49326"/>
<dbReference type="PhosphoSitePlus" id="P49326"/>
<dbReference type="BioMuta" id="FMO5"/>
<dbReference type="DMDM" id="1346021"/>
<dbReference type="jPOST" id="P49326"/>
<dbReference type="MassIVE" id="P49326"/>
<dbReference type="PaxDb" id="9606-ENSP00000254090"/>
<dbReference type="PeptideAtlas" id="P49326"/>
<dbReference type="ProteomicsDB" id="10453"/>
<dbReference type="ProteomicsDB" id="55987">
    <molecule id="P49326-1"/>
</dbReference>
<dbReference type="ProteomicsDB" id="55988">
    <molecule id="P49326-2"/>
</dbReference>
<dbReference type="Antibodypedia" id="2436">
    <property type="antibodies" value="208 antibodies from 25 providers"/>
</dbReference>
<dbReference type="DNASU" id="2330"/>
<dbReference type="Ensembl" id="ENST00000254090.9">
    <molecule id="P49326-1"/>
    <property type="protein sequence ID" value="ENSP00000254090.4"/>
    <property type="gene ID" value="ENSG00000131781.13"/>
</dbReference>
<dbReference type="Ensembl" id="ENST00000369272.7">
    <molecule id="P49326-2"/>
    <property type="protein sequence ID" value="ENSP00000358277.3"/>
    <property type="gene ID" value="ENSG00000131781.13"/>
</dbReference>
<dbReference type="Ensembl" id="ENST00000441068.6">
    <molecule id="P49326-3"/>
    <property type="protein sequence ID" value="ENSP00000416011.2"/>
    <property type="gene ID" value="ENSG00000131781.13"/>
</dbReference>
<dbReference type="Ensembl" id="ENST00000578284.5">
    <molecule id="P49326-3"/>
    <property type="protein sequence ID" value="ENSP00000462062.2"/>
    <property type="gene ID" value="ENSG00000131781.13"/>
</dbReference>
<dbReference type="GeneID" id="2330"/>
<dbReference type="KEGG" id="hsa:2330"/>
<dbReference type="MANE-Select" id="ENST00000254090.9">
    <property type="protein sequence ID" value="ENSP00000254090.4"/>
    <property type="RefSeq nucleotide sequence ID" value="NM_001461.4"/>
    <property type="RefSeq protein sequence ID" value="NP_001452.2"/>
</dbReference>
<dbReference type="UCSC" id="uc001eph.5">
    <molecule id="P49326-1"/>
    <property type="organism name" value="human"/>
</dbReference>
<dbReference type="AGR" id="HGNC:3773"/>
<dbReference type="CTD" id="2330"/>
<dbReference type="DisGeNET" id="2330"/>
<dbReference type="GeneCards" id="FMO5"/>
<dbReference type="HGNC" id="HGNC:3773">
    <property type="gene designation" value="FMO5"/>
</dbReference>
<dbReference type="HPA" id="ENSG00000131781">
    <property type="expression patterns" value="Tissue enriched (liver)"/>
</dbReference>
<dbReference type="MIM" id="603957">
    <property type="type" value="gene"/>
</dbReference>
<dbReference type="neXtProt" id="NX_P49326"/>
<dbReference type="OpenTargets" id="ENSG00000131781"/>
<dbReference type="PharmGKB" id="PA28189"/>
<dbReference type="VEuPathDB" id="HostDB:ENSG00000131781"/>
<dbReference type="eggNOG" id="KOG1399">
    <property type="taxonomic scope" value="Eukaryota"/>
</dbReference>
<dbReference type="GeneTree" id="ENSGT00940000160493"/>
<dbReference type="HOGENOM" id="CLU_006909_8_0_1"/>
<dbReference type="InParanoid" id="P49326"/>
<dbReference type="OMA" id="CCTGYDI"/>
<dbReference type="OrthoDB" id="66881at2759"/>
<dbReference type="PAN-GO" id="P49326">
    <property type="GO annotations" value="1 GO annotation based on evolutionary models"/>
</dbReference>
<dbReference type="PhylomeDB" id="P49326"/>
<dbReference type="TreeFam" id="TF105285"/>
<dbReference type="BRENDA" id="1.14.13.8">
    <property type="organism ID" value="2681"/>
</dbReference>
<dbReference type="PathwayCommons" id="P49326"/>
<dbReference type="SABIO-RK" id="P49326"/>
<dbReference type="SignaLink" id="P49326"/>
<dbReference type="BioGRID-ORCS" id="2330">
    <property type="hits" value="9 hits in 1151 CRISPR screens"/>
</dbReference>
<dbReference type="ChiTaRS" id="FMO5">
    <property type="organism name" value="human"/>
</dbReference>
<dbReference type="GeneWiki" id="FMO5"/>
<dbReference type="GenomeRNAi" id="2330"/>
<dbReference type="Pharos" id="P49326">
    <property type="development level" value="Tbio"/>
</dbReference>
<dbReference type="PRO" id="PR:P49326"/>
<dbReference type="Proteomes" id="UP000005640">
    <property type="component" value="Chromosome 1"/>
</dbReference>
<dbReference type="RNAct" id="P49326">
    <property type="molecule type" value="protein"/>
</dbReference>
<dbReference type="Bgee" id="ENSG00000131781">
    <property type="expression patterns" value="Expressed in right lobe of liver and 132 other cell types or tissues"/>
</dbReference>
<dbReference type="ExpressionAtlas" id="P49326">
    <property type="expression patterns" value="baseline and differential"/>
</dbReference>
<dbReference type="GO" id="GO:0005829">
    <property type="term" value="C:cytosol"/>
    <property type="evidence" value="ECO:0000314"/>
    <property type="project" value="HPA"/>
</dbReference>
<dbReference type="GO" id="GO:0005783">
    <property type="term" value="C:endoplasmic reticulum"/>
    <property type="evidence" value="ECO:0000314"/>
    <property type="project" value="HPA"/>
</dbReference>
<dbReference type="GO" id="GO:0005789">
    <property type="term" value="C:endoplasmic reticulum membrane"/>
    <property type="evidence" value="ECO:0007669"/>
    <property type="project" value="UniProtKB-SubCell"/>
</dbReference>
<dbReference type="GO" id="GO:0050660">
    <property type="term" value="F:flavin adenine dinucleotide binding"/>
    <property type="evidence" value="ECO:0007669"/>
    <property type="project" value="InterPro"/>
</dbReference>
<dbReference type="GO" id="GO:0004497">
    <property type="term" value="F:monooxygenase activity"/>
    <property type="evidence" value="ECO:0000314"/>
    <property type="project" value="UniProtKB"/>
</dbReference>
<dbReference type="GO" id="GO:0004499">
    <property type="term" value="F:N,N-dimethylaniline monooxygenase activity"/>
    <property type="evidence" value="ECO:0000318"/>
    <property type="project" value="GO_Central"/>
</dbReference>
<dbReference type="GO" id="GO:0050661">
    <property type="term" value="F:NADP binding"/>
    <property type="evidence" value="ECO:0007669"/>
    <property type="project" value="InterPro"/>
</dbReference>
<dbReference type="GO" id="GO:0106294">
    <property type="term" value="F:NADPH oxidase H202-forming activity"/>
    <property type="evidence" value="ECO:0007669"/>
    <property type="project" value="RHEA"/>
</dbReference>
<dbReference type="GO" id="GO:0006629">
    <property type="term" value="P:lipid metabolic process"/>
    <property type="evidence" value="ECO:0007669"/>
    <property type="project" value="UniProtKB-KW"/>
</dbReference>
<dbReference type="GO" id="GO:0090181">
    <property type="term" value="P:regulation of cholesterol metabolic process"/>
    <property type="evidence" value="ECO:0000250"/>
    <property type="project" value="UniProtKB"/>
</dbReference>
<dbReference type="GO" id="GO:0006805">
    <property type="term" value="P:xenobiotic metabolic process"/>
    <property type="evidence" value="ECO:0000314"/>
    <property type="project" value="UniProtKB"/>
</dbReference>
<dbReference type="FunFam" id="3.50.50.60:FF:000042">
    <property type="entry name" value="Dimethylaniline monooxygenase [N-oxide-forming]"/>
    <property type="match status" value="1"/>
</dbReference>
<dbReference type="FunFam" id="3.50.50.60:FF:000073">
    <property type="entry name" value="Dimethylaniline monooxygenase [N-oxide-forming]"/>
    <property type="match status" value="1"/>
</dbReference>
<dbReference type="FunFam" id="3.50.50.60:FF:000409">
    <property type="entry name" value="Dimethylaniline monooxygenase [N-oxide-forming]"/>
    <property type="match status" value="1"/>
</dbReference>
<dbReference type="Gene3D" id="3.50.50.60">
    <property type="entry name" value="FAD/NAD(P)-binding domain"/>
    <property type="match status" value="2"/>
</dbReference>
<dbReference type="InterPro" id="IPR036188">
    <property type="entry name" value="FAD/NAD-bd_sf"/>
</dbReference>
<dbReference type="InterPro" id="IPR000960">
    <property type="entry name" value="Flavin_mOase"/>
</dbReference>
<dbReference type="InterPro" id="IPR020946">
    <property type="entry name" value="Flavin_mOase-like"/>
</dbReference>
<dbReference type="InterPro" id="IPR002257">
    <property type="entry name" value="Flavin_mOase_5"/>
</dbReference>
<dbReference type="InterPro" id="IPR050346">
    <property type="entry name" value="FMO-like"/>
</dbReference>
<dbReference type="PANTHER" id="PTHR23023">
    <property type="entry name" value="DIMETHYLANILINE MONOOXYGENASE"/>
    <property type="match status" value="1"/>
</dbReference>
<dbReference type="Pfam" id="PF00743">
    <property type="entry name" value="FMO-like"/>
    <property type="match status" value="1"/>
</dbReference>
<dbReference type="PIRSF" id="PIRSF000332">
    <property type="entry name" value="FMO"/>
    <property type="match status" value="1"/>
</dbReference>
<dbReference type="PRINTS" id="PR00370">
    <property type="entry name" value="FMOXYGENASE"/>
</dbReference>
<dbReference type="PRINTS" id="PR01125">
    <property type="entry name" value="FMOXYGENASE5"/>
</dbReference>
<dbReference type="SUPFAM" id="SSF51905">
    <property type="entry name" value="FAD/NAD(P)-binding domain"/>
    <property type="match status" value="2"/>
</dbReference>
<comment type="function">
    <text evidence="1 6 7 8 9 17">Acts as a Baeyer-Villiger monooxygenase on a broad range of substrates. Catalyzes the insertion of an oxygen atom into a carbon-carbon bond adjacent to a carbonyl, which converts ketones to esters (PubMed:20947616, PubMed:26771671, PubMed:28783300). Active on diverse carbonyl compounds, whereas soft nucleophiles are mostly non- or poorly reactive (PubMed:26771671, PubMed:7872795). In contrast with other forms of FMO it is non- or poorly active on 'classical' substrates such as drugs, pesticides, and dietary components containing soft nucleophilic heteroatoms (Probable) (PubMed:7872795). Able to oxidize drug molecules bearing a carbonyl group on an aliphatic chain, such as nabumetone and pentoxifylline (PubMed:28783300). Also, in the absence of substrates, shows slow but yet significant NADPH oxidase activity (PubMed:26771671). Acts as a positive modulator of cholesterol biosynthesis as well as glucose homeostasis, promoting metabolic aging via pleiotropic effects (By similarity).</text>
</comment>
<comment type="catalytic activity">
    <reaction evidence="9">
        <text>N,N-dimethylaniline + NADPH + O2 + H(+) = N,N-dimethylaniline N-oxide + NADP(+) + H2O</text>
        <dbReference type="Rhea" id="RHEA:24468"/>
        <dbReference type="ChEBI" id="CHEBI:15377"/>
        <dbReference type="ChEBI" id="CHEBI:15378"/>
        <dbReference type="ChEBI" id="CHEBI:15379"/>
        <dbReference type="ChEBI" id="CHEBI:16269"/>
        <dbReference type="ChEBI" id="CHEBI:17735"/>
        <dbReference type="ChEBI" id="CHEBI:57783"/>
        <dbReference type="ChEBI" id="CHEBI:58349"/>
        <dbReference type="EC" id="1.14.13.8"/>
    </reaction>
    <physiologicalReaction direction="left-to-right" evidence="18">
        <dbReference type="Rhea" id="RHEA:24469"/>
    </physiologicalReaction>
</comment>
<comment type="catalytic activity">
    <reaction evidence="7">
        <text>NADPH + O2 + H(+) = H2O2 + NADP(+)</text>
        <dbReference type="Rhea" id="RHEA:11260"/>
        <dbReference type="ChEBI" id="CHEBI:15378"/>
        <dbReference type="ChEBI" id="CHEBI:15379"/>
        <dbReference type="ChEBI" id="CHEBI:16240"/>
        <dbReference type="ChEBI" id="CHEBI:57783"/>
        <dbReference type="ChEBI" id="CHEBI:58349"/>
        <dbReference type="EC" id="1.6.3.1"/>
    </reaction>
    <physiologicalReaction direction="left-to-right" evidence="17">
        <dbReference type="Rhea" id="RHEA:11261"/>
    </physiologicalReaction>
</comment>
<comment type="catalytic activity">
    <reaction evidence="7">
        <text>heptan-2-one + NADPH + O2 + H(+) = pentyl acetate + NADP(+) + H2O</text>
        <dbReference type="Rhea" id="RHEA:54836"/>
        <dbReference type="ChEBI" id="CHEBI:5672"/>
        <dbReference type="ChEBI" id="CHEBI:15377"/>
        <dbReference type="ChEBI" id="CHEBI:15378"/>
        <dbReference type="ChEBI" id="CHEBI:15379"/>
        <dbReference type="ChEBI" id="CHEBI:57783"/>
        <dbReference type="ChEBI" id="CHEBI:58349"/>
        <dbReference type="ChEBI" id="CHEBI:87362"/>
    </reaction>
    <physiologicalReaction direction="left-to-right" evidence="17">
        <dbReference type="Rhea" id="RHEA:54837"/>
    </physiologicalReaction>
</comment>
<comment type="catalytic activity">
    <reaction evidence="7">
        <text>octan-3-one + NADPH + O2 + H(+) = pentyl propanoate + NADP(+) + H2O</text>
        <dbReference type="Rhea" id="RHEA:54840"/>
        <dbReference type="ChEBI" id="CHEBI:15377"/>
        <dbReference type="ChEBI" id="CHEBI:15378"/>
        <dbReference type="ChEBI" id="CHEBI:15379"/>
        <dbReference type="ChEBI" id="CHEBI:57783"/>
        <dbReference type="ChEBI" id="CHEBI:58349"/>
        <dbReference type="ChEBI" id="CHEBI:80946"/>
        <dbReference type="ChEBI" id="CHEBI:87373"/>
    </reaction>
    <physiologicalReaction direction="left-to-right" evidence="17">
        <dbReference type="Rhea" id="RHEA:54841"/>
    </physiologicalReaction>
</comment>
<comment type="catalytic activity">
    <reaction evidence="7">
        <text>octan-3-one + NADPH + O2 + H(+) = ethyl hexanoate + NADP(+) + H2O</text>
        <dbReference type="Rhea" id="RHEA:54856"/>
        <dbReference type="ChEBI" id="CHEBI:15377"/>
        <dbReference type="ChEBI" id="CHEBI:15378"/>
        <dbReference type="ChEBI" id="CHEBI:15379"/>
        <dbReference type="ChEBI" id="CHEBI:57783"/>
        <dbReference type="ChEBI" id="CHEBI:58349"/>
        <dbReference type="ChEBI" id="CHEBI:80946"/>
        <dbReference type="ChEBI" id="CHEBI:86055"/>
    </reaction>
    <physiologicalReaction direction="left-to-right" evidence="17">
        <dbReference type="Rhea" id="RHEA:54857"/>
    </physiologicalReaction>
</comment>
<comment type="catalytic activity">
    <reaction evidence="7">
        <text>hexan-3-one + NADPH + O2 + H(+) = ethyl butanoate + NADP(+) + H2O</text>
        <dbReference type="Rhea" id="RHEA:54844"/>
        <dbReference type="ChEBI" id="CHEBI:15377"/>
        <dbReference type="ChEBI" id="CHEBI:15378"/>
        <dbReference type="ChEBI" id="CHEBI:15379"/>
        <dbReference type="ChEBI" id="CHEBI:57783"/>
        <dbReference type="ChEBI" id="CHEBI:58349"/>
        <dbReference type="ChEBI" id="CHEBI:88764"/>
        <dbReference type="ChEBI" id="CHEBI:89891"/>
    </reaction>
    <physiologicalReaction direction="left-to-right" evidence="17">
        <dbReference type="Rhea" id="RHEA:54845"/>
    </physiologicalReaction>
</comment>
<comment type="catalytic activity">
    <reaction evidence="7">
        <text>hexan-3-one + NADPH + O2 + H(+) = propyl propanoate + NADP(+) + H2O</text>
        <dbReference type="Rhea" id="RHEA:54848"/>
        <dbReference type="ChEBI" id="CHEBI:15377"/>
        <dbReference type="ChEBI" id="CHEBI:15378"/>
        <dbReference type="ChEBI" id="CHEBI:15379"/>
        <dbReference type="ChEBI" id="CHEBI:57783"/>
        <dbReference type="ChEBI" id="CHEBI:58349"/>
        <dbReference type="ChEBI" id="CHEBI:89828"/>
        <dbReference type="ChEBI" id="CHEBI:89891"/>
    </reaction>
    <physiologicalReaction direction="left-to-right" evidence="17">
        <dbReference type="Rhea" id="RHEA:54849"/>
    </physiologicalReaction>
</comment>
<comment type="catalytic activity">
    <reaction evidence="7">
        <text>heptan-4-one + NADPH + O2 + H(+) = propyl butanoate + NADP(+) + H2O</text>
        <dbReference type="Rhea" id="RHEA:54852"/>
        <dbReference type="ChEBI" id="CHEBI:15377"/>
        <dbReference type="ChEBI" id="CHEBI:15378"/>
        <dbReference type="ChEBI" id="CHEBI:15379"/>
        <dbReference type="ChEBI" id="CHEBI:57783"/>
        <dbReference type="ChEBI" id="CHEBI:58349"/>
        <dbReference type="ChEBI" id="CHEBI:89484"/>
        <dbReference type="ChEBI" id="CHEBI:89719"/>
    </reaction>
    <physiologicalReaction direction="left-to-right" evidence="17">
        <dbReference type="Rhea" id="RHEA:54853"/>
    </physiologicalReaction>
</comment>
<comment type="catalytic activity">
    <reaction evidence="7">
        <text>(2E)-geranial + NADPH + O2 + H(+) = (1E)-2,6-dimethylhepta-1,5-dien-1-yl formate + NADP(+) + H2O</text>
        <dbReference type="Rhea" id="RHEA:54860"/>
        <dbReference type="ChEBI" id="CHEBI:15377"/>
        <dbReference type="ChEBI" id="CHEBI:15378"/>
        <dbReference type="ChEBI" id="CHEBI:15379"/>
        <dbReference type="ChEBI" id="CHEBI:16980"/>
        <dbReference type="ChEBI" id="CHEBI:57783"/>
        <dbReference type="ChEBI" id="CHEBI:58349"/>
        <dbReference type="ChEBI" id="CHEBI:138375"/>
    </reaction>
    <physiologicalReaction direction="left-to-right" evidence="17">
        <dbReference type="Rhea" id="RHEA:54861"/>
    </physiologicalReaction>
</comment>
<comment type="catalytic activity">
    <reaction evidence="7">
        <text>sulcatone + NADPH + O2 + H(+) = 4-methylpent-3-en-1-yl acetate + NADP(+) + H2O</text>
        <dbReference type="Rhea" id="RHEA:54864"/>
        <dbReference type="ChEBI" id="CHEBI:15377"/>
        <dbReference type="ChEBI" id="CHEBI:15378"/>
        <dbReference type="ChEBI" id="CHEBI:15379"/>
        <dbReference type="ChEBI" id="CHEBI:16310"/>
        <dbReference type="ChEBI" id="CHEBI:57783"/>
        <dbReference type="ChEBI" id="CHEBI:58349"/>
        <dbReference type="ChEBI" id="CHEBI:138373"/>
    </reaction>
    <physiologicalReaction direction="left-to-right" evidence="17">
        <dbReference type="Rhea" id="RHEA:54865"/>
    </physiologicalReaction>
</comment>
<comment type="cofactor">
    <cofactor>
        <name>FAD</name>
        <dbReference type="ChEBI" id="CHEBI:57692"/>
    </cofactor>
</comment>
<comment type="biophysicochemical properties">
    <kinetics>
        <KM evidence="7">59 uM for NADPH</KM>
        <text evidence="7">kcat is 11.84 min(-1) for the NADPH oxidase activity releasing hydrogen peroxide from O2.</text>
    </kinetics>
</comment>
<comment type="subcellular location">
    <subcellularLocation>
        <location evidence="16">Microsome membrane</location>
    </subcellularLocation>
    <subcellularLocation>
        <location>Endoplasmic reticulum membrane</location>
    </subcellularLocation>
</comment>
<comment type="alternative products">
    <event type="alternative splicing"/>
    <isoform>
        <id>P49326-1</id>
        <name>1</name>
        <sequence type="displayed"/>
    </isoform>
    <isoform>
        <id>P49326-2</id>
        <name>2</name>
        <sequence type="described" ref="VSP_042729 VSP_042730"/>
    </isoform>
    <isoform>
        <id>P49326-3</id>
        <name>3</name>
        <sequence type="described" ref="VSP_045616 VSP_045617"/>
    </isoform>
</comment>
<comment type="tissue specificity">
    <text evidence="9 16">Expressed in fetal and adult liver.</text>
</comment>
<comment type="similarity">
    <text evidence="15">Belongs to the FMO family.</text>
</comment>
<protein>
    <recommendedName>
        <fullName>Flavin-containing monooxygenase 5</fullName>
        <shortName>FMO 5</shortName>
    </recommendedName>
    <alternativeName>
        <fullName evidence="13">Baeyer-Villiger monooxygenase 1</fullName>
        <shortName evidence="13">hBVMO1</shortName>
        <ecNumber evidence="6 7 8">1.14.13.-</ecNumber>
    </alternativeName>
    <alternativeName>
        <fullName evidence="15">Dimethylaniline monooxygenase [N-oxide-forming] 5</fullName>
        <ecNumber evidence="9">1.14.13.8</ecNumber>
    </alternativeName>
    <alternativeName>
        <fullName>Dimethylaniline oxidase 5</fullName>
    </alternativeName>
    <alternativeName>
        <fullName evidence="12">NADPH oxidase</fullName>
        <ecNumber evidence="7">1.6.3.1</ecNumber>
    </alternativeName>
</protein>
<reference key="1">
    <citation type="journal article" date="1995" name="Arch. Biochem. Biophys.">
        <title>Characterization of flavin-containing monooxygenase 5 (FMO5) cloned from human and guinea pig: evidence that the unique catalytic properties of FMO5 are not confined to the rabbit ortholog.</title>
        <authorList>
            <person name="Overby L.H."/>
            <person name="Buckpitt A.R."/>
            <person name="Lawton M.P."/>
            <person name="Atta-Asafo-Adjei E."/>
            <person name="Schulze J."/>
            <person name="Philpot R.M."/>
        </authorList>
    </citation>
    <scope>NUCLEOTIDE SEQUENCE [MRNA] (ISOFORM 1)</scope>
    <scope>TISSUE SPECIFICITY</scope>
    <scope>FUNCTION</scope>
    <scope>CATALYTIC ACTIVITY</scope>
    <source>
        <tissue>Liver</tissue>
    </source>
</reference>
<reference key="2">
    <citation type="submission" date="1995-01" db="EMBL/GenBank/DDBJ databases">
        <title>Cloning, primary sequence and chromosomal localisation of human flavin-containing monooxygenase 5 (FMO5).</title>
        <authorList>
            <person name="Dolphin C.T."/>
            <person name="Povey S."/>
            <person name="Shephard E.A."/>
            <person name="Smith R.L."/>
            <person name="Phillips I.R."/>
        </authorList>
    </citation>
    <scope>NUCLEOTIDE SEQUENCE [MRNA] (ISOFORM 1)</scope>
    <source>
        <tissue>Liver</tissue>
        <tissue>Placenta</tissue>
    </source>
</reference>
<reference key="3">
    <citation type="submission" date="2005-01" db="EMBL/GenBank/DDBJ databases">
        <authorList>
            <consortium name="NIEHS SNPs program"/>
        </authorList>
    </citation>
    <scope>NUCLEOTIDE SEQUENCE [GENOMIC DNA]</scope>
    <scope>VARIANTS ALA-400 AND SER-506</scope>
</reference>
<reference key="4">
    <citation type="journal article" date="2004" name="Nat. Genet.">
        <title>Complete sequencing and characterization of 21,243 full-length human cDNAs.</title>
        <authorList>
            <person name="Ota T."/>
            <person name="Suzuki Y."/>
            <person name="Nishikawa T."/>
            <person name="Otsuki T."/>
            <person name="Sugiyama T."/>
            <person name="Irie R."/>
            <person name="Wakamatsu A."/>
            <person name="Hayashi K."/>
            <person name="Sato H."/>
            <person name="Nagai K."/>
            <person name="Kimura K."/>
            <person name="Makita H."/>
            <person name="Sekine M."/>
            <person name="Obayashi M."/>
            <person name="Nishi T."/>
            <person name="Shibahara T."/>
            <person name="Tanaka T."/>
            <person name="Ishii S."/>
            <person name="Yamamoto J."/>
            <person name="Saito K."/>
            <person name="Kawai Y."/>
            <person name="Isono Y."/>
            <person name="Nakamura Y."/>
            <person name="Nagahari K."/>
            <person name="Murakami K."/>
            <person name="Yasuda T."/>
            <person name="Iwayanagi T."/>
            <person name="Wagatsuma M."/>
            <person name="Shiratori A."/>
            <person name="Sudo H."/>
            <person name="Hosoiri T."/>
            <person name="Kaku Y."/>
            <person name="Kodaira H."/>
            <person name="Kondo H."/>
            <person name="Sugawara M."/>
            <person name="Takahashi M."/>
            <person name="Kanda K."/>
            <person name="Yokoi T."/>
            <person name="Furuya T."/>
            <person name="Kikkawa E."/>
            <person name="Omura Y."/>
            <person name="Abe K."/>
            <person name="Kamihara K."/>
            <person name="Katsuta N."/>
            <person name="Sato K."/>
            <person name="Tanikawa M."/>
            <person name="Yamazaki M."/>
            <person name="Ninomiya K."/>
            <person name="Ishibashi T."/>
            <person name="Yamashita H."/>
            <person name="Murakawa K."/>
            <person name="Fujimori K."/>
            <person name="Tanai H."/>
            <person name="Kimata M."/>
            <person name="Watanabe M."/>
            <person name="Hiraoka S."/>
            <person name="Chiba Y."/>
            <person name="Ishida S."/>
            <person name="Ono Y."/>
            <person name="Takiguchi S."/>
            <person name="Watanabe S."/>
            <person name="Yosida M."/>
            <person name="Hotuta T."/>
            <person name="Kusano J."/>
            <person name="Kanehori K."/>
            <person name="Takahashi-Fujii A."/>
            <person name="Hara H."/>
            <person name="Tanase T.-O."/>
            <person name="Nomura Y."/>
            <person name="Togiya S."/>
            <person name="Komai F."/>
            <person name="Hara R."/>
            <person name="Takeuchi K."/>
            <person name="Arita M."/>
            <person name="Imose N."/>
            <person name="Musashino K."/>
            <person name="Yuuki H."/>
            <person name="Oshima A."/>
            <person name="Sasaki N."/>
            <person name="Aotsuka S."/>
            <person name="Yoshikawa Y."/>
            <person name="Matsunawa H."/>
            <person name="Ichihara T."/>
            <person name="Shiohata N."/>
            <person name="Sano S."/>
            <person name="Moriya S."/>
            <person name="Momiyama H."/>
            <person name="Satoh N."/>
            <person name="Takami S."/>
            <person name="Terashima Y."/>
            <person name="Suzuki O."/>
            <person name="Nakagawa S."/>
            <person name="Senoh A."/>
            <person name="Mizoguchi H."/>
            <person name="Goto Y."/>
            <person name="Shimizu F."/>
            <person name="Wakebe H."/>
            <person name="Hishigaki H."/>
            <person name="Watanabe T."/>
            <person name="Sugiyama A."/>
            <person name="Takemoto M."/>
            <person name="Kawakami B."/>
            <person name="Yamazaki M."/>
            <person name="Watanabe K."/>
            <person name="Kumagai A."/>
            <person name="Itakura S."/>
            <person name="Fukuzumi Y."/>
            <person name="Fujimori Y."/>
            <person name="Komiyama M."/>
            <person name="Tashiro H."/>
            <person name="Tanigami A."/>
            <person name="Fujiwara T."/>
            <person name="Ono T."/>
            <person name="Yamada K."/>
            <person name="Fujii Y."/>
            <person name="Ozaki K."/>
            <person name="Hirao M."/>
            <person name="Ohmori Y."/>
            <person name="Kawabata A."/>
            <person name="Hikiji T."/>
            <person name="Kobatake N."/>
            <person name="Inagaki H."/>
            <person name="Ikema Y."/>
            <person name="Okamoto S."/>
            <person name="Okitani R."/>
            <person name="Kawakami T."/>
            <person name="Noguchi S."/>
            <person name="Itoh T."/>
            <person name="Shigeta K."/>
            <person name="Senba T."/>
            <person name="Matsumura K."/>
            <person name="Nakajima Y."/>
            <person name="Mizuno T."/>
            <person name="Morinaga M."/>
            <person name="Sasaki M."/>
            <person name="Togashi T."/>
            <person name="Oyama M."/>
            <person name="Hata H."/>
            <person name="Watanabe M."/>
            <person name="Komatsu T."/>
            <person name="Mizushima-Sugano J."/>
            <person name="Satoh T."/>
            <person name="Shirai Y."/>
            <person name="Takahashi Y."/>
            <person name="Nakagawa K."/>
            <person name="Okumura K."/>
            <person name="Nagase T."/>
            <person name="Nomura N."/>
            <person name="Kikuchi H."/>
            <person name="Masuho Y."/>
            <person name="Yamashita R."/>
            <person name="Nakai K."/>
            <person name="Yada T."/>
            <person name="Nakamura Y."/>
            <person name="Ohara O."/>
            <person name="Isogai T."/>
            <person name="Sugano S."/>
        </authorList>
    </citation>
    <scope>NUCLEOTIDE SEQUENCE [LARGE SCALE MRNA] (ISOFORM 1)</scope>
    <source>
        <tissue>Trachea</tissue>
    </source>
</reference>
<reference key="5">
    <citation type="submission" date="2006-07" db="EMBL/GenBank/DDBJ databases">
        <authorList>
            <person name="Suzuki Y."/>
            <person name="Sugano S."/>
            <person name="Totoki Y."/>
            <person name="Toyoda A."/>
            <person name="Takeda T."/>
            <person name="Sakaki Y."/>
            <person name="Tanaka A."/>
            <person name="Yokoyama S."/>
        </authorList>
    </citation>
    <scope>NUCLEOTIDE SEQUENCE [LARGE SCALE MRNA] (ISOFORM 3)</scope>
    <source>
        <tissue>Testis</tissue>
    </source>
</reference>
<reference key="6">
    <citation type="journal article" date="2006" name="Nature">
        <title>The DNA sequence and biological annotation of human chromosome 1.</title>
        <authorList>
            <person name="Gregory S.G."/>
            <person name="Barlow K.F."/>
            <person name="McLay K.E."/>
            <person name="Kaul R."/>
            <person name="Swarbreck D."/>
            <person name="Dunham A."/>
            <person name="Scott C.E."/>
            <person name="Howe K.L."/>
            <person name="Woodfine K."/>
            <person name="Spencer C.C.A."/>
            <person name="Jones M.C."/>
            <person name="Gillson C."/>
            <person name="Searle S."/>
            <person name="Zhou Y."/>
            <person name="Kokocinski F."/>
            <person name="McDonald L."/>
            <person name="Evans R."/>
            <person name="Phillips K."/>
            <person name="Atkinson A."/>
            <person name="Cooper R."/>
            <person name="Jones C."/>
            <person name="Hall R.E."/>
            <person name="Andrews T.D."/>
            <person name="Lloyd C."/>
            <person name="Ainscough R."/>
            <person name="Almeida J.P."/>
            <person name="Ambrose K.D."/>
            <person name="Anderson F."/>
            <person name="Andrew R.W."/>
            <person name="Ashwell R.I.S."/>
            <person name="Aubin K."/>
            <person name="Babbage A.K."/>
            <person name="Bagguley C.L."/>
            <person name="Bailey J."/>
            <person name="Beasley H."/>
            <person name="Bethel G."/>
            <person name="Bird C.P."/>
            <person name="Bray-Allen S."/>
            <person name="Brown J.Y."/>
            <person name="Brown A.J."/>
            <person name="Buckley D."/>
            <person name="Burton J."/>
            <person name="Bye J."/>
            <person name="Carder C."/>
            <person name="Chapman J.C."/>
            <person name="Clark S.Y."/>
            <person name="Clarke G."/>
            <person name="Clee C."/>
            <person name="Cobley V."/>
            <person name="Collier R.E."/>
            <person name="Corby N."/>
            <person name="Coville G.J."/>
            <person name="Davies J."/>
            <person name="Deadman R."/>
            <person name="Dunn M."/>
            <person name="Earthrowl M."/>
            <person name="Ellington A.G."/>
            <person name="Errington H."/>
            <person name="Frankish A."/>
            <person name="Frankland J."/>
            <person name="French L."/>
            <person name="Garner P."/>
            <person name="Garnett J."/>
            <person name="Gay L."/>
            <person name="Ghori M.R.J."/>
            <person name="Gibson R."/>
            <person name="Gilby L.M."/>
            <person name="Gillett W."/>
            <person name="Glithero R.J."/>
            <person name="Grafham D.V."/>
            <person name="Griffiths C."/>
            <person name="Griffiths-Jones S."/>
            <person name="Grocock R."/>
            <person name="Hammond S."/>
            <person name="Harrison E.S.I."/>
            <person name="Hart E."/>
            <person name="Haugen E."/>
            <person name="Heath P.D."/>
            <person name="Holmes S."/>
            <person name="Holt K."/>
            <person name="Howden P.J."/>
            <person name="Hunt A.R."/>
            <person name="Hunt S.E."/>
            <person name="Hunter G."/>
            <person name="Isherwood J."/>
            <person name="James R."/>
            <person name="Johnson C."/>
            <person name="Johnson D."/>
            <person name="Joy A."/>
            <person name="Kay M."/>
            <person name="Kershaw J.K."/>
            <person name="Kibukawa M."/>
            <person name="Kimberley A.M."/>
            <person name="King A."/>
            <person name="Knights A.J."/>
            <person name="Lad H."/>
            <person name="Laird G."/>
            <person name="Lawlor S."/>
            <person name="Leongamornlert D.A."/>
            <person name="Lloyd D.M."/>
            <person name="Loveland J."/>
            <person name="Lovell J."/>
            <person name="Lush M.J."/>
            <person name="Lyne R."/>
            <person name="Martin S."/>
            <person name="Mashreghi-Mohammadi M."/>
            <person name="Matthews L."/>
            <person name="Matthews N.S.W."/>
            <person name="McLaren S."/>
            <person name="Milne S."/>
            <person name="Mistry S."/>
            <person name="Moore M.J.F."/>
            <person name="Nickerson T."/>
            <person name="O'Dell C.N."/>
            <person name="Oliver K."/>
            <person name="Palmeiri A."/>
            <person name="Palmer S.A."/>
            <person name="Parker A."/>
            <person name="Patel D."/>
            <person name="Pearce A.V."/>
            <person name="Peck A.I."/>
            <person name="Pelan S."/>
            <person name="Phelps K."/>
            <person name="Phillimore B.J."/>
            <person name="Plumb R."/>
            <person name="Rajan J."/>
            <person name="Raymond C."/>
            <person name="Rouse G."/>
            <person name="Saenphimmachak C."/>
            <person name="Sehra H.K."/>
            <person name="Sheridan E."/>
            <person name="Shownkeen R."/>
            <person name="Sims S."/>
            <person name="Skuce C.D."/>
            <person name="Smith M."/>
            <person name="Steward C."/>
            <person name="Subramanian S."/>
            <person name="Sycamore N."/>
            <person name="Tracey A."/>
            <person name="Tromans A."/>
            <person name="Van Helmond Z."/>
            <person name="Wall M."/>
            <person name="Wallis J.M."/>
            <person name="White S."/>
            <person name="Whitehead S.L."/>
            <person name="Wilkinson J.E."/>
            <person name="Willey D.L."/>
            <person name="Williams H."/>
            <person name="Wilming L."/>
            <person name="Wray P.W."/>
            <person name="Wu Z."/>
            <person name="Coulson A."/>
            <person name="Vaudin M."/>
            <person name="Sulston J.E."/>
            <person name="Durbin R.M."/>
            <person name="Hubbard T."/>
            <person name="Wooster R."/>
            <person name="Dunham I."/>
            <person name="Carter N.P."/>
            <person name="McVean G."/>
            <person name="Ross M.T."/>
            <person name="Harrow J."/>
            <person name="Olson M.V."/>
            <person name="Beck S."/>
            <person name="Rogers J."/>
            <person name="Bentley D.R."/>
        </authorList>
    </citation>
    <scope>NUCLEOTIDE SEQUENCE [LARGE SCALE GENOMIC DNA]</scope>
</reference>
<reference key="7">
    <citation type="submission" date="2005-07" db="EMBL/GenBank/DDBJ databases">
        <authorList>
            <person name="Mural R.J."/>
            <person name="Istrail S."/>
            <person name="Sutton G.G."/>
            <person name="Florea L."/>
            <person name="Halpern A.L."/>
            <person name="Mobarry C.M."/>
            <person name="Lippert R."/>
            <person name="Walenz B."/>
            <person name="Shatkay H."/>
            <person name="Dew I."/>
            <person name="Miller J.R."/>
            <person name="Flanigan M.J."/>
            <person name="Edwards N.J."/>
            <person name="Bolanos R."/>
            <person name="Fasulo D."/>
            <person name="Halldorsson B.V."/>
            <person name="Hannenhalli S."/>
            <person name="Turner R."/>
            <person name="Yooseph S."/>
            <person name="Lu F."/>
            <person name="Nusskern D.R."/>
            <person name="Shue B.C."/>
            <person name="Zheng X.H."/>
            <person name="Zhong F."/>
            <person name="Delcher A.L."/>
            <person name="Huson D.H."/>
            <person name="Kravitz S.A."/>
            <person name="Mouchard L."/>
            <person name="Reinert K."/>
            <person name="Remington K.A."/>
            <person name="Clark A.G."/>
            <person name="Waterman M.S."/>
            <person name="Eichler E.E."/>
            <person name="Adams M.D."/>
            <person name="Hunkapiller M.W."/>
            <person name="Myers E.W."/>
            <person name="Venter J.C."/>
        </authorList>
    </citation>
    <scope>NUCLEOTIDE SEQUENCE [LARGE SCALE GENOMIC DNA]</scope>
</reference>
<reference key="8">
    <citation type="journal article" date="2004" name="Genome Res.">
        <title>The status, quality, and expansion of the NIH full-length cDNA project: the Mammalian Gene Collection (MGC).</title>
        <authorList>
            <consortium name="The MGC Project Team"/>
        </authorList>
    </citation>
    <scope>NUCLEOTIDE SEQUENCE [LARGE SCALE MRNA] (ISOFORM 2)</scope>
    <source>
        <tissue>Brain</tissue>
    </source>
</reference>
<reference key="9">
    <citation type="journal article" date="2014" name="J. Proteomics">
        <title>An enzyme assisted RP-RPLC approach for in-depth analysis of human liver phosphoproteome.</title>
        <authorList>
            <person name="Bian Y."/>
            <person name="Song C."/>
            <person name="Cheng K."/>
            <person name="Dong M."/>
            <person name="Wang F."/>
            <person name="Huang J."/>
            <person name="Sun D."/>
            <person name="Wang L."/>
            <person name="Ye M."/>
            <person name="Zou H."/>
        </authorList>
    </citation>
    <scope>PHOSPHORYLATION [LARGE SCALE ANALYSIS] AT SER-54; TYR-56; SER-58; SER-280 AND THR-284</scope>
    <scope>IDENTIFICATION BY MASS SPECTROMETRY [LARGE SCALE ANALYSIS]</scope>
    <source>
        <tissue>Liver</tissue>
    </source>
</reference>
<reference key="10">
    <citation type="journal article" date="2011" name="Drug Metab. Dispos.">
        <title>A Baeyer-Villiger oxidation specifically catalyzed by human flavin-containing monooxygenase 5.</title>
        <authorList>
            <person name="Lai W.G."/>
            <person name="Farah N."/>
            <person name="Moniz G.A."/>
            <person name="Wong Y.N."/>
        </authorList>
    </citation>
    <scope>FUNCTION</scope>
    <scope>SUBCELLULAR LOCATION</scope>
    <scope>TISSUE SPECIFICITY</scope>
</reference>
<reference key="11">
    <citation type="journal article" date="2016" name="ACS Chem. Biol.">
        <title>Biocatalytic Characterization of Human FMO5: Unearthing Baeyer-Villiger Reactions in Humans.</title>
        <authorList>
            <person name="Fiorentini F."/>
            <person name="Geier M."/>
            <person name="Binda C."/>
            <person name="Winkler M."/>
            <person name="Faber K."/>
            <person name="Hall M."/>
            <person name="Mattevi A."/>
        </authorList>
    </citation>
    <scope>FUNCTION</scope>
    <scope>CATALYTIC ACTIVITY</scope>
    <scope>BIOPHYSICOCHEMICAL PROPERTIES</scope>
</reference>
<reference key="12">
    <citation type="journal article" date="2017" name="ACS Chem. Biol.">
        <title>Baeyer-Villiger Monooxygenase FMO5 as Entry Point in Drug Metabolism.</title>
        <authorList>
            <person name="Fiorentini F."/>
            <person name="Romero E."/>
            <person name="Fraaije M.W."/>
            <person name="Faber K."/>
            <person name="Hall M."/>
            <person name="Mattevi A."/>
        </authorList>
    </citation>
    <scope>FUNCTION</scope>
</reference>
<reference key="13">
    <citation type="journal article" date="2003" name="Drug Metab. Dispos.">
        <title>Identification of novel variants of the flavin-containing monooxygenase gene family in African Americans.</title>
        <authorList>
            <person name="Furnes B."/>
            <person name="Feng J."/>
            <person name="Sommer S.S."/>
            <person name="Schlenk D."/>
        </authorList>
    </citation>
    <scope>VARIANT LEU-457</scope>
</reference>
<organism>
    <name type="scientific">Homo sapiens</name>
    <name type="common">Human</name>
    <dbReference type="NCBI Taxonomy" id="9606"/>
    <lineage>
        <taxon>Eukaryota</taxon>
        <taxon>Metazoa</taxon>
        <taxon>Chordata</taxon>
        <taxon>Craniata</taxon>
        <taxon>Vertebrata</taxon>
        <taxon>Euteleostomi</taxon>
        <taxon>Mammalia</taxon>
        <taxon>Eutheria</taxon>
        <taxon>Euarchontoglires</taxon>
        <taxon>Primates</taxon>
        <taxon>Haplorrhini</taxon>
        <taxon>Catarrhini</taxon>
        <taxon>Hominidae</taxon>
        <taxon>Homo</taxon>
    </lineage>
</organism>
<evidence type="ECO:0000250" key="1">
    <source>
        <dbReference type="UniProtKB" id="P97872"/>
    </source>
</evidence>
<evidence type="ECO:0000250" key="2">
    <source>
        <dbReference type="UniProtKB" id="Q8K4C0"/>
    </source>
</evidence>
<evidence type="ECO:0000250" key="3">
    <source>
        <dbReference type="UniProtKB" id="Q9HFE4"/>
    </source>
</evidence>
<evidence type="ECO:0000255" key="4"/>
<evidence type="ECO:0000269" key="5">
    <source>
    </source>
</evidence>
<evidence type="ECO:0000269" key="6">
    <source>
    </source>
</evidence>
<evidence type="ECO:0000269" key="7">
    <source>
    </source>
</evidence>
<evidence type="ECO:0000269" key="8">
    <source>
    </source>
</evidence>
<evidence type="ECO:0000269" key="9">
    <source>
    </source>
</evidence>
<evidence type="ECO:0000269" key="10">
    <source ref="3"/>
</evidence>
<evidence type="ECO:0000303" key="11">
    <source>
    </source>
</evidence>
<evidence type="ECO:0000303" key="12">
    <source>
    </source>
</evidence>
<evidence type="ECO:0000303" key="13">
    <source>
    </source>
</evidence>
<evidence type="ECO:0000303" key="14">
    <source ref="5"/>
</evidence>
<evidence type="ECO:0000305" key="15"/>
<evidence type="ECO:0000305" key="16">
    <source>
    </source>
</evidence>
<evidence type="ECO:0000305" key="17">
    <source>
    </source>
</evidence>
<evidence type="ECO:0000305" key="18">
    <source>
    </source>
</evidence>
<evidence type="ECO:0000312" key="19">
    <source>
        <dbReference type="HGNC" id="HGNC:3773"/>
    </source>
</evidence>
<evidence type="ECO:0007744" key="20">
    <source>
    </source>
</evidence>
<accession>P49326</accession>
<accession>B2RBG1</accession>
<accession>C9JJD1</accession>
<accession>Q8IV22</accession>
<feature type="chain" id="PRO_0000147665" description="Flavin-containing monooxygenase 5">
    <location>
        <begin position="1"/>
        <end position="533"/>
    </location>
</feature>
<feature type="transmembrane region" description="Helical" evidence="4">
    <location>
        <begin position="513"/>
        <end position="533"/>
    </location>
</feature>
<feature type="binding site" evidence="3">
    <location>
        <begin position="10"/>
        <end position="14"/>
    </location>
    <ligand>
        <name>FAD</name>
        <dbReference type="ChEBI" id="CHEBI:57692"/>
    </ligand>
</feature>
<feature type="binding site" evidence="3">
    <location>
        <position position="33"/>
    </location>
    <ligand>
        <name>FAD</name>
        <dbReference type="ChEBI" id="CHEBI:57692"/>
    </ligand>
</feature>
<feature type="binding site" evidence="3">
    <location>
        <begin position="41"/>
        <end position="42"/>
    </location>
    <ligand>
        <name>FAD</name>
        <dbReference type="ChEBI" id="CHEBI:57692"/>
    </ligand>
</feature>
<feature type="binding site" evidence="3">
    <location>
        <begin position="62"/>
        <end position="63"/>
    </location>
    <ligand>
        <name>FAD</name>
        <dbReference type="ChEBI" id="CHEBI:57692"/>
    </ligand>
</feature>
<feature type="binding site" evidence="3">
    <location>
        <begin position="196"/>
        <end position="199"/>
    </location>
    <ligand>
        <name>NADP(+)</name>
        <dbReference type="ChEBI" id="CHEBI:58349"/>
    </ligand>
</feature>
<feature type="modified residue" description="Dimethylated arginine" evidence="2">
    <location>
        <position position="5"/>
    </location>
</feature>
<feature type="modified residue" description="Phosphoserine" evidence="20">
    <location>
        <position position="54"/>
    </location>
</feature>
<feature type="modified residue" description="Phosphotyrosine" evidence="20">
    <location>
        <position position="56"/>
    </location>
</feature>
<feature type="modified residue" description="Phosphoserine" evidence="20">
    <location>
        <position position="58"/>
    </location>
</feature>
<feature type="modified residue" description="Phosphoserine" evidence="20">
    <location>
        <position position="280"/>
    </location>
</feature>
<feature type="modified residue" description="Phosphothreonine" evidence="20">
    <location>
        <position position="284"/>
    </location>
</feature>
<feature type="modified residue" description="Phosphoserine" evidence="1">
    <location>
        <position position="401"/>
    </location>
</feature>
<feature type="splice variant" id="VSP_042729" description="In isoform 2." evidence="11">
    <original>ALSQHPTL</original>
    <variation>SKDIALTE</variation>
    <location>
        <begin position="278"/>
        <end position="285"/>
    </location>
</feature>
<feature type="splice variant" id="VSP_042730" description="In isoform 2." evidence="11">
    <location>
        <begin position="286"/>
        <end position="533"/>
    </location>
</feature>
<feature type="splice variant" id="VSP_045616" description="In isoform 3." evidence="14">
    <original>RYVESQRHTIQGDYIDTMEELADLVGVRPNLLSLAFTDPKLALHLL</original>
    <variation>SLTMRKTSDKPKLKNILQIPDYLKTVKIINKESLRNCPGIKGPKET</variation>
    <location>
        <begin position="419"/>
        <end position="464"/>
    </location>
</feature>
<feature type="splice variant" id="VSP_045617" description="In isoform 3." evidence="14">
    <location>
        <begin position="465"/>
        <end position="533"/>
    </location>
</feature>
<feature type="sequence variant" id="VAR_022308" description="In dbSNP:rs28381218." evidence="10">
    <original>P</original>
    <variation>A</variation>
    <location>
        <position position="400"/>
    </location>
</feature>
<feature type="sequence variant" id="VAR_015370" description="In dbSNP:rs72549314." evidence="5">
    <original>P</original>
    <variation>L</variation>
    <location>
        <position position="457"/>
    </location>
</feature>
<feature type="sequence variant" id="VAR_022309" description="In dbSNP:rs28381223." evidence="10">
    <original>R</original>
    <variation>S</variation>
    <location>
        <position position="506"/>
    </location>
</feature>
<feature type="sequence conflict" description="In Ref. 2; CAA87633." evidence="15" ref="2">
    <original>S</original>
    <variation>P</variation>
    <location>
        <position position="351"/>
    </location>
</feature>
<sequence length="533" mass="60221">MTKKRIAVIGGGVSGLSSIKCCVEEGLEPVCFERTDDIGGLWRFQENPEEGRASIYKSVIINTSKEMMCFSDYPIPDHYPNFMHNAQVLEYFRMYAKEFDLLKYIRFKTTVCSVKKQPDFATSGQWEVVTESEGKKEMNVFDGVMVCTGHHTNAHLPLESFPGIEKFKGQYFHSRDYKNPEGFTGKRVIIIGIGNSGGDLAVEISQTAKQVFLSTRRGAWILNRVGDYGYPADVLFSSRLTHFIWKICGQSLANKYLEKKINQRFDHEMFGLKPKHRALSQHPTLNDDLPNRIISGLVKVKGNVKEFTETAAIFEDGSREDDIDAVIFATGYSFDFPFLEDSVKVVKNKISLYKKVFPPNLERPTLAIIGLIQPLGAIMPISELQGRWATQVFKGLKTLPSQSEMMAEISKAQEEIDKRYVESQRHTIQGDYIDTMEELADLVGVRPNLLSLAFTDPKLALHLLLGPCTPIHYRVQGPGKWDGARKAILTTDDRIRKPLMTRVVERSSSMTSTMTIGKFMLALAFFAIIIAYF</sequence>
<proteinExistence type="evidence at protein level"/>
<name>FMO5_HUMAN</name>
<gene>
    <name evidence="19" type="primary">FMO5</name>
</gene>